<feature type="chain" id="PRO_1000213812" description="Cell division protein SepF">
    <location>
        <begin position="1"/>
        <end position="152"/>
    </location>
</feature>
<sequence length="152" mass="17514">MGLSNKFKSFFFLDEEEEYYEEEVAREPEPMQKKTKKEKPNKNRFYAVEEDDAKVVSMQGAQFSSRMVLAEPRVYAEAQELADYLKEYKSVVVNLQRISHDQATRIVDFLSGTVYALGGDIQRVGNNIFLCTPDNVEVDGSISEMLDEQNFM</sequence>
<gene>
    <name evidence="1" type="primary">sepF</name>
    <name type="ordered locus">Lm4b_02051</name>
</gene>
<name>SEPF_LISMC</name>
<dbReference type="EMBL" id="FM242711">
    <property type="protein sequence ID" value="CAS05810.1"/>
    <property type="molecule type" value="Genomic_DNA"/>
</dbReference>
<dbReference type="RefSeq" id="WP_003724067.1">
    <property type="nucleotide sequence ID" value="NC_012488.1"/>
</dbReference>
<dbReference type="SMR" id="C1KWY3"/>
<dbReference type="KEGG" id="lmc:Lm4b_02051"/>
<dbReference type="HOGENOM" id="CLU_078499_4_1_9"/>
<dbReference type="GO" id="GO:0005737">
    <property type="term" value="C:cytoplasm"/>
    <property type="evidence" value="ECO:0007669"/>
    <property type="project" value="UniProtKB-SubCell"/>
</dbReference>
<dbReference type="GO" id="GO:0000917">
    <property type="term" value="P:division septum assembly"/>
    <property type="evidence" value="ECO:0007669"/>
    <property type="project" value="UniProtKB-KW"/>
</dbReference>
<dbReference type="GO" id="GO:0043093">
    <property type="term" value="P:FtsZ-dependent cytokinesis"/>
    <property type="evidence" value="ECO:0007669"/>
    <property type="project" value="UniProtKB-UniRule"/>
</dbReference>
<dbReference type="Gene3D" id="3.30.110.150">
    <property type="entry name" value="SepF-like protein"/>
    <property type="match status" value="1"/>
</dbReference>
<dbReference type="HAMAP" id="MF_01197">
    <property type="entry name" value="SepF"/>
    <property type="match status" value="1"/>
</dbReference>
<dbReference type="InterPro" id="IPR023052">
    <property type="entry name" value="Cell_div_SepF"/>
</dbReference>
<dbReference type="InterPro" id="IPR007561">
    <property type="entry name" value="Cell_div_SepF/SepF-rel"/>
</dbReference>
<dbReference type="InterPro" id="IPR038594">
    <property type="entry name" value="SepF-like_sf"/>
</dbReference>
<dbReference type="PANTHER" id="PTHR35798">
    <property type="entry name" value="CELL DIVISION PROTEIN SEPF"/>
    <property type="match status" value="1"/>
</dbReference>
<dbReference type="PANTHER" id="PTHR35798:SF1">
    <property type="entry name" value="CELL DIVISION PROTEIN SEPF"/>
    <property type="match status" value="1"/>
</dbReference>
<dbReference type="Pfam" id="PF04472">
    <property type="entry name" value="SepF"/>
    <property type="match status" value="1"/>
</dbReference>
<keyword id="KW-0131">Cell cycle</keyword>
<keyword id="KW-0132">Cell division</keyword>
<keyword id="KW-0963">Cytoplasm</keyword>
<keyword id="KW-0717">Septation</keyword>
<organism>
    <name type="scientific">Listeria monocytogenes serotype 4b (strain CLIP80459)</name>
    <dbReference type="NCBI Taxonomy" id="568819"/>
    <lineage>
        <taxon>Bacteria</taxon>
        <taxon>Bacillati</taxon>
        <taxon>Bacillota</taxon>
        <taxon>Bacilli</taxon>
        <taxon>Bacillales</taxon>
        <taxon>Listeriaceae</taxon>
        <taxon>Listeria</taxon>
    </lineage>
</organism>
<proteinExistence type="inferred from homology"/>
<evidence type="ECO:0000255" key="1">
    <source>
        <dbReference type="HAMAP-Rule" id="MF_01197"/>
    </source>
</evidence>
<reference key="1">
    <citation type="journal article" date="2012" name="BMC Genomics">
        <title>Comparative genomics and transcriptomics of lineages I, II, and III strains of Listeria monocytogenes.</title>
        <authorList>
            <person name="Hain T."/>
            <person name="Ghai R."/>
            <person name="Billion A."/>
            <person name="Kuenne C.T."/>
            <person name="Steinweg C."/>
            <person name="Izar B."/>
            <person name="Mohamed W."/>
            <person name="Mraheil M."/>
            <person name="Domann E."/>
            <person name="Schaffrath S."/>
            <person name="Karst U."/>
            <person name="Goesmann A."/>
            <person name="Oehm S."/>
            <person name="Puhler A."/>
            <person name="Merkl R."/>
            <person name="Vorwerk S."/>
            <person name="Glaser P."/>
            <person name="Garrido P."/>
            <person name="Rusniok C."/>
            <person name="Buchrieser C."/>
            <person name="Goebel W."/>
            <person name="Chakraborty T."/>
        </authorList>
    </citation>
    <scope>NUCLEOTIDE SEQUENCE [LARGE SCALE GENOMIC DNA]</scope>
    <source>
        <strain>CLIP80459</strain>
    </source>
</reference>
<comment type="function">
    <text evidence="1">Cell division protein that is part of the divisome complex and is recruited early to the Z-ring. Probably stimulates Z-ring formation, perhaps through the cross-linking of FtsZ protofilaments. Its function overlaps with FtsA.</text>
</comment>
<comment type="subunit">
    <text evidence="1">Homodimer. Interacts with FtsZ.</text>
</comment>
<comment type="subcellular location">
    <subcellularLocation>
        <location evidence="1">Cytoplasm</location>
    </subcellularLocation>
    <text evidence="1">Localizes to the division site, in a FtsZ-dependent manner.</text>
</comment>
<comment type="similarity">
    <text evidence="1">Belongs to the SepF family.</text>
</comment>
<accession>C1KWY3</accession>
<protein>
    <recommendedName>
        <fullName evidence="1">Cell division protein SepF</fullName>
    </recommendedName>
</protein>